<organism>
    <name type="scientific">Shewanella denitrificans (strain OS217 / ATCC BAA-1090 / DSM 15013)</name>
    <dbReference type="NCBI Taxonomy" id="318161"/>
    <lineage>
        <taxon>Bacteria</taxon>
        <taxon>Pseudomonadati</taxon>
        <taxon>Pseudomonadota</taxon>
        <taxon>Gammaproteobacteria</taxon>
        <taxon>Alteromonadales</taxon>
        <taxon>Shewanellaceae</taxon>
        <taxon>Shewanella</taxon>
    </lineage>
</organism>
<gene>
    <name evidence="1" type="primary">rsmA</name>
    <name evidence="1" type="synonym">ksgA</name>
    <name type="ordered locus">Sden_2888</name>
</gene>
<proteinExistence type="inferred from homology"/>
<keyword id="KW-0963">Cytoplasm</keyword>
<keyword id="KW-0489">Methyltransferase</keyword>
<keyword id="KW-1185">Reference proteome</keyword>
<keyword id="KW-0694">RNA-binding</keyword>
<keyword id="KW-0698">rRNA processing</keyword>
<keyword id="KW-0949">S-adenosyl-L-methionine</keyword>
<keyword id="KW-0808">Transferase</keyword>
<feature type="chain" id="PRO_1000056668" description="Ribosomal RNA small subunit methyltransferase A">
    <location>
        <begin position="1"/>
        <end position="267"/>
    </location>
</feature>
<feature type="binding site" evidence="1">
    <location>
        <position position="18"/>
    </location>
    <ligand>
        <name>S-adenosyl-L-methionine</name>
        <dbReference type="ChEBI" id="CHEBI:59789"/>
    </ligand>
</feature>
<feature type="binding site" evidence="1">
    <location>
        <position position="20"/>
    </location>
    <ligand>
        <name>S-adenosyl-L-methionine</name>
        <dbReference type="ChEBI" id="CHEBI:59789"/>
    </ligand>
</feature>
<feature type="binding site" evidence="1">
    <location>
        <position position="45"/>
    </location>
    <ligand>
        <name>S-adenosyl-L-methionine</name>
        <dbReference type="ChEBI" id="CHEBI:59789"/>
    </ligand>
</feature>
<feature type="binding site" evidence="1">
    <location>
        <position position="66"/>
    </location>
    <ligand>
        <name>S-adenosyl-L-methionine</name>
        <dbReference type="ChEBI" id="CHEBI:59789"/>
    </ligand>
</feature>
<feature type="binding site" evidence="1">
    <location>
        <position position="91"/>
    </location>
    <ligand>
        <name>S-adenosyl-L-methionine</name>
        <dbReference type="ChEBI" id="CHEBI:59789"/>
    </ligand>
</feature>
<feature type="binding site" evidence="1">
    <location>
        <position position="112"/>
    </location>
    <ligand>
        <name>S-adenosyl-L-methionine</name>
        <dbReference type="ChEBI" id="CHEBI:59789"/>
    </ligand>
</feature>
<reference key="1">
    <citation type="submission" date="2006-03" db="EMBL/GenBank/DDBJ databases">
        <title>Complete sequence of Shewanella denitrificans OS217.</title>
        <authorList>
            <consortium name="US DOE Joint Genome Institute"/>
            <person name="Copeland A."/>
            <person name="Lucas S."/>
            <person name="Lapidus A."/>
            <person name="Barry K."/>
            <person name="Detter J.C."/>
            <person name="Glavina del Rio T."/>
            <person name="Hammon N."/>
            <person name="Israni S."/>
            <person name="Dalin E."/>
            <person name="Tice H."/>
            <person name="Pitluck S."/>
            <person name="Brettin T."/>
            <person name="Bruce D."/>
            <person name="Han C."/>
            <person name="Tapia R."/>
            <person name="Gilna P."/>
            <person name="Kiss H."/>
            <person name="Schmutz J."/>
            <person name="Larimer F."/>
            <person name="Land M."/>
            <person name="Hauser L."/>
            <person name="Kyrpides N."/>
            <person name="Lykidis A."/>
            <person name="Richardson P."/>
        </authorList>
    </citation>
    <scope>NUCLEOTIDE SEQUENCE [LARGE SCALE GENOMIC DNA]</scope>
    <source>
        <strain>OS217 / ATCC BAA-1090 / DSM 15013</strain>
    </source>
</reference>
<comment type="function">
    <text evidence="1">Specifically dimethylates two adjacent adenosines (A1518 and A1519) in the loop of a conserved hairpin near the 3'-end of 16S rRNA in the 30S particle. May play a critical role in biogenesis of 30S subunits.</text>
</comment>
<comment type="catalytic activity">
    <reaction evidence="1">
        <text>adenosine(1518)/adenosine(1519) in 16S rRNA + 4 S-adenosyl-L-methionine = N(6)-dimethyladenosine(1518)/N(6)-dimethyladenosine(1519) in 16S rRNA + 4 S-adenosyl-L-homocysteine + 4 H(+)</text>
        <dbReference type="Rhea" id="RHEA:19609"/>
        <dbReference type="Rhea" id="RHEA-COMP:10232"/>
        <dbReference type="Rhea" id="RHEA-COMP:10233"/>
        <dbReference type="ChEBI" id="CHEBI:15378"/>
        <dbReference type="ChEBI" id="CHEBI:57856"/>
        <dbReference type="ChEBI" id="CHEBI:59789"/>
        <dbReference type="ChEBI" id="CHEBI:74411"/>
        <dbReference type="ChEBI" id="CHEBI:74493"/>
        <dbReference type="EC" id="2.1.1.182"/>
    </reaction>
</comment>
<comment type="subcellular location">
    <subcellularLocation>
        <location evidence="1">Cytoplasm</location>
    </subcellularLocation>
</comment>
<comment type="similarity">
    <text evidence="1">Belongs to the class I-like SAM-binding methyltransferase superfamily. rRNA adenine N(6)-methyltransferase family. RsmA subfamily.</text>
</comment>
<evidence type="ECO:0000255" key="1">
    <source>
        <dbReference type="HAMAP-Rule" id="MF_00607"/>
    </source>
</evidence>
<protein>
    <recommendedName>
        <fullName evidence="1">Ribosomal RNA small subunit methyltransferase A</fullName>
        <ecNumber evidence="1">2.1.1.182</ecNumber>
    </recommendedName>
    <alternativeName>
        <fullName evidence="1">16S rRNA (adenine(1518)-N(6)/adenine(1519)-N(6))-dimethyltransferase</fullName>
    </alternativeName>
    <alternativeName>
        <fullName evidence="1">16S rRNA dimethyladenosine transferase</fullName>
    </alternativeName>
    <alternativeName>
        <fullName evidence="1">16S rRNA dimethylase</fullName>
    </alternativeName>
    <alternativeName>
        <fullName evidence="1">S-adenosylmethionine-6-N', N'-adenosyl(rRNA) dimethyltransferase</fullName>
    </alternativeName>
</protein>
<dbReference type="EC" id="2.1.1.182" evidence="1"/>
<dbReference type="EMBL" id="CP000302">
    <property type="protein sequence ID" value="ABE56167.1"/>
    <property type="molecule type" value="Genomic_DNA"/>
</dbReference>
<dbReference type="RefSeq" id="WP_011497316.1">
    <property type="nucleotide sequence ID" value="NC_007954.1"/>
</dbReference>
<dbReference type="SMR" id="Q12K59"/>
<dbReference type="STRING" id="318161.Sden_2888"/>
<dbReference type="KEGG" id="sdn:Sden_2888"/>
<dbReference type="eggNOG" id="COG0030">
    <property type="taxonomic scope" value="Bacteria"/>
</dbReference>
<dbReference type="HOGENOM" id="CLU_041220_0_1_6"/>
<dbReference type="OrthoDB" id="9814755at2"/>
<dbReference type="Proteomes" id="UP000001982">
    <property type="component" value="Chromosome"/>
</dbReference>
<dbReference type="GO" id="GO:0005829">
    <property type="term" value="C:cytosol"/>
    <property type="evidence" value="ECO:0007669"/>
    <property type="project" value="TreeGrafter"/>
</dbReference>
<dbReference type="GO" id="GO:0052908">
    <property type="term" value="F:16S rRNA (adenine(1518)-N(6)/adenine(1519)-N(6))-dimethyltransferase activity"/>
    <property type="evidence" value="ECO:0007669"/>
    <property type="project" value="UniProtKB-EC"/>
</dbReference>
<dbReference type="GO" id="GO:0003723">
    <property type="term" value="F:RNA binding"/>
    <property type="evidence" value="ECO:0007669"/>
    <property type="project" value="UniProtKB-KW"/>
</dbReference>
<dbReference type="FunFam" id="1.10.8.100:FF:000001">
    <property type="entry name" value="Ribosomal RNA small subunit methyltransferase A"/>
    <property type="match status" value="1"/>
</dbReference>
<dbReference type="FunFam" id="3.40.50.150:FF:000006">
    <property type="entry name" value="Ribosomal RNA small subunit methyltransferase A"/>
    <property type="match status" value="1"/>
</dbReference>
<dbReference type="Gene3D" id="1.10.8.100">
    <property type="entry name" value="Ribosomal RNA adenine dimethylase-like, domain 2"/>
    <property type="match status" value="1"/>
</dbReference>
<dbReference type="Gene3D" id="3.40.50.150">
    <property type="entry name" value="Vaccinia Virus protein VP39"/>
    <property type="match status" value="1"/>
</dbReference>
<dbReference type="HAMAP" id="MF_00607">
    <property type="entry name" value="16SrRNA_methyltr_A"/>
    <property type="match status" value="1"/>
</dbReference>
<dbReference type="InterPro" id="IPR001737">
    <property type="entry name" value="KsgA/Erm"/>
</dbReference>
<dbReference type="InterPro" id="IPR023165">
    <property type="entry name" value="rRNA_Ade_diMease-like_C"/>
</dbReference>
<dbReference type="InterPro" id="IPR020596">
    <property type="entry name" value="rRNA_Ade_Mease_Trfase_CS"/>
</dbReference>
<dbReference type="InterPro" id="IPR020598">
    <property type="entry name" value="rRNA_Ade_methylase_Trfase_N"/>
</dbReference>
<dbReference type="InterPro" id="IPR011530">
    <property type="entry name" value="rRNA_adenine_dimethylase"/>
</dbReference>
<dbReference type="InterPro" id="IPR029063">
    <property type="entry name" value="SAM-dependent_MTases_sf"/>
</dbReference>
<dbReference type="NCBIfam" id="TIGR00755">
    <property type="entry name" value="ksgA"/>
    <property type="match status" value="1"/>
</dbReference>
<dbReference type="PANTHER" id="PTHR11727">
    <property type="entry name" value="DIMETHYLADENOSINE TRANSFERASE"/>
    <property type="match status" value="1"/>
</dbReference>
<dbReference type="PANTHER" id="PTHR11727:SF7">
    <property type="entry name" value="DIMETHYLADENOSINE TRANSFERASE-RELATED"/>
    <property type="match status" value="1"/>
</dbReference>
<dbReference type="Pfam" id="PF00398">
    <property type="entry name" value="RrnaAD"/>
    <property type="match status" value="1"/>
</dbReference>
<dbReference type="SMART" id="SM00650">
    <property type="entry name" value="rADc"/>
    <property type="match status" value="1"/>
</dbReference>
<dbReference type="SUPFAM" id="SSF53335">
    <property type="entry name" value="S-adenosyl-L-methionine-dependent methyltransferases"/>
    <property type="match status" value="1"/>
</dbReference>
<dbReference type="PROSITE" id="PS01131">
    <property type="entry name" value="RRNA_A_DIMETH"/>
    <property type="match status" value="1"/>
</dbReference>
<dbReference type="PROSITE" id="PS51689">
    <property type="entry name" value="SAM_RNA_A_N6_MT"/>
    <property type="match status" value="1"/>
</dbReference>
<name>RSMA_SHEDO</name>
<accession>Q12K59</accession>
<sequence>MSNKVHLGHTARKRFGQNFLTDDSIISRIVGAISPDNDHVMVEIGPGLGAITEPVAMSIDKLSVVELDRDLVERLQNHPTLKDKLDIHQGDALQFDFSTLQQAGKKMKVFGNLPYNISTPLMFHLFEFAEIIETMHFMLQKEVVLRLSASPGCKAYGRLTVMAQYYCQVVPVLEVPPHSFTPAPKVDSAVVRLLPYANKPWPCKDVTVLRHLCTTAFNMRRKTLRNNLKQLISDEEFGLLNIDASLRPEQISVEQYVALANLLCDKQ</sequence>